<gene>
    <name evidence="1" type="primary">anmK</name>
    <name type="ordered locus">ECIAI1_1692</name>
</gene>
<name>ANMK_ECO8A</name>
<comment type="function">
    <text evidence="1">Catalyzes the specific phosphorylation of 1,6-anhydro-N-acetylmuramic acid (anhMurNAc) with the simultaneous cleavage of the 1,6-anhydro ring, generating MurNAc-6-P. Is required for the utilization of anhMurNAc either imported from the medium or derived from its own cell wall murein, and thus plays a role in cell wall recycling.</text>
</comment>
<comment type="catalytic activity">
    <reaction evidence="1">
        <text>1,6-anhydro-N-acetyl-beta-muramate + ATP + H2O = N-acetyl-D-muramate 6-phosphate + ADP + H(+)</text>
        <dbReference type="Rhea" id="RHEA:24952"/>
        <dbReference type="ChEBI" id="CHEBI:15377"/>
        <dbReference type="ChEBI" id="CHEBI:15378"/>
        <dbReference type="ChEBI" id="CHEBI:30616"/>
        <dbReference type="ChEBI" id="CHEBI:58690"/>
        <dbReference type="ChEBI" id="CHEBI:58722"/>
        <dbReference type="ChEBI" id="CHEBI:456216"/>
        <dbReference type="EC" id="2.7.1.170"/>
    </reaction>
</comment>
<comment type="pathway">
    <text evidence="1">Amino-sugar metabolism; 1,6-anhydro-N-acetylmuramate degradation.</text>
</comment>
<comment type="pathway">
    <text evidence="1">Cell wall biogenesis; peptidoglycan recycling.</text>
</comment>
<comment type="similarity">
    <text evidence="1">Belongs to the anhydro-N-acetylmuramic acid kinase family.</text>
</comment>
<feature type="chain" id="PRO_1000140156" description="Anhydro-N-acetylmuramic acid kinase">
    <location>
        <begin position="1"/>
        <end position="369"/>
    </location>
</feature>
<feature type="binding site" evidence="1">
    <location>
        <begin position="12"/>
        <end position="19"/>
    </location>
    <ligand>
        <name>ATP</name>
        <dbReference type="ChEBI" id="CHEBI:30616"/>
    </ligand>
</feature>
<keyword id="KW-0067">ATP-binding</keyword>
<keyword id="KW-0119">Carbohydrate metabolism</keyword>
<keyword id="KW-0418">Kinase</keyword>
<keyword id="KW-0547">Nucleotide-binding</keyword>
<keyword id="KW-0808">Transferase</keyword>
<proteinExistence type="inferred from homology"/>
<dbReference type="EC" id="2.7.1.170" evidence="1"/>
<dbReference type="EMBL" id="CU928160">
    <property type="protein sequence ID" value="CAQ98549.1"/>
    <property type="molecule type" value="Genomic_DNA"/>
</dbReference>
<dbReference type="RefSeq" id="WP_000835053.1">
    <property type="nucleotide sequence ID" value="NC_011741.1"/>
</dbReference>
<dbReference type="SMR" id="B7M0J7"/>
<dbReference type="KEGG" id="ecr:ECIAI1_1692"/>
<dbReference type="HOGENOM" id="CLU_038782_0_0_6"/>
<dbReference type="UniPathway" id="UPA00343"/>
<dbReference type="UniPathway" id="UPA00544"/>
<dbReference type="GO" id="GO:0005524">
    <property type="term" value="F:ATP binding"/>
    <property type="evidence" value="ECO:0007669"/>
    <property type="project" value="UniProtKB-UniRule"/>
</dbReference>
<dbReference type="GO" id="GO:0016301">
    <property type="term" value="F:kinase activity"/>
    <property type="evidence" value="ECO:0007669"/>
    <property type="project" value="UniProtKB-KW"/>
</dbReference>
<dbReference type="GO" id="GO:0016773">
    <property type="term" value="F:phosphotransferase activity, alcohol group as acceptor"/>
    <property type="evidence" value="ECO:0007669"/>
    <property type="project" value="UniProtKB-UniRule"/>
</dbReference>
<dbReference type="GO" id="GO:0097175">
    <property type="term" value="P:1,6-anhydro-N-acetyl-beta-muramic acid catabolic process"/>
    <property type="evidence" value="ECO:0007669"/>
    <property type="project" value="UniProtKB-UniRule"/>
</dbReference>
<dbReference type="GO" id="GO:0006040">
    <property type="term" value="P:amino sugar metabolic process"/>
    <property type="evidence" value="ECO:0007669"/>
    <property type="project" value="InterPro"/>
</dbReference>
<dbReference type="GO" id="GO:0009254">
    <property type="term" value="P:peptidoglycan turnover"/>
    <property type="evidence" value="ECO:0007669"/>
    <property type="project" value="UniProtKB-UniRule"/>
</dbReference>
<dbReference type="CDD" id="cd24050">
    <property type="entry name" value="ASKHA_NBD_ANMK"/>
    <property type="match status" value="1"/>
</dbReference>
<dbReference type="FunFam" id="3.30.420.40:FF:000090">
    <property type="entry name" value="Anhydro-N-acetylmuramic acid kinase"/>
    <property type="match status" value="1"/>
</dbReference>
<dbReference type="Gene3D" id="3.30.420.40">
    <property type="match status" value="2"/>
</dbReference>
<dbReference type="HAMAP" id="MF_01270">
    <property type="entry name" value="AnhMurNAc_kinase"/>
    <property type="match status" value="1"/>
</dbReference>
<dbReference type="InterPro" id="IPR005338">
    <property type="entry name" value="Anhydro_N_Ac-Mur_kinase"/>
</dbReference>
<dbReference type="InterPro" id="IPR043129">
    <property type="entry name" value="ATPase_NBD"/>
</dbReference>
<dbReference type="NCBIfam" id="NF007138">
    <property type="entry name" value="PRK09585.1-1"/>
    <property type="match status" value="1"/>
</dbReference>
<dbReference type="NCBIfam" id="NF007139">
    <property type="entry name" value="PRK09585.1-3"/>
    <property type="match status" value="1"/>
</dbReference>
<dbReference type="NCBIfam" id="NF007148">
    <property type="entry name" value="PRK09585.3-2"/>
    <property type="match status" value="1"/>
</dbReference>
<dbReference type="PANTHER" id="PTHR30605">
    <property type="entry name" value="ANHYDRO-N-ACETYLMURAMIC ACID KINASE"/>
    <property type="match status" value="1"/>
</dbReference>
<dbReference type="PANTHER" id="PTHR30605:SF0">
    <property type="entry name" value="ANHYDRO-N-ACETYLMURAMIC ACID KINASE"/>
    <property type="match status" value="1"/>
</dbReference>
<dbReference type="Pfam" id="PF03702">
    <property type="entry name" value="AnmK"/>
    <property type="match status" value="1"/>
</dbReference>
<dbReference type="SUPFAM" id="SSF53067">
    <property type="entry name" value="Actin-like ATPase domain"/>
    <property type="match status" value="1"/>
</dbReference>
<sequence>MKSGRFIGVMSGTSLDGVDVVLATIDEHRVAQLASLSWPIPVSLKQAVLDICQGQQLTLSQFGQLDTQLGRLFADAVNALLKEQNLQARDIVAIGCHGQTVWHEPTGVAPHTLQIGDNNQIVARTGITVVGDFRRRDIALGGQGAPLVPAFHHALLAHPTEQRMVLNIGGIANLSLLIPGQPVGGYDTGPGNMLMDAWIWRQAGKPYDKDAEWARAGKVILPLLQNMLSDPYFSQPAPKSTGREYFNYGWLERHLRHFPGVDPRDVQATLAELTAVTISEQVLLSGGCERLMVCGGGSRNPLLMARLAALLPGTEVTTTDAVGISGDDMEALAFAWLAWRTLAGLPGNLPSVTGASQETVLGAIFPANP</sequence>
<evidence type="ECO:0000255" key="1">
    <source>
        <dbReference type="HAMAP-Rule" id="MF_01270"/>
    </source>
</evidence>
<organism>
    <name type="scientific">Escherichia coli O8 (strain IAI1)</name>
    <dbReference type="NCBI Taxonomy" id="585034"/>
    <lineage>
        <taxon>Bacteria</taxon>
        <taxon>Pseudomonadati</taxon>
        <taxon>Pseudomonadota</taxon>
        <taxon>Gammaproteobacteria</taxon>
        <taxon>Enterobacterales</taxon>
        <taxon>Enterobacteriaceae</taxon>
        <taxon>Escherichia</taxon>
    </lineage>
</organism>
<reference key="1">
    <citation type="journal article" date="2009" name="PLoS Genet.">
        <title>Organised genome dynamics in the Escherichia coli species results in highly diverse adaptive paths.</title>
        <authorList>
            <person name="Touchon M."/>
            <person name="Hoede C."/>
            <person name="Tenaillon O."/>
            <person name="Barbe V."/>
            <person name="Baeriswyl S."/>
            <person name="Bidet P."/>
            <person name="Bingen E."/>
            <person name="Bonacorsi S."/>
            <person name="Bouchier C."/>
            <person name="Bouvet O."/>
            <person name="Calteau A."/>
            <person name="Chiapello H."/>
            <person name="Clermont O."/>
            <person name="Cruveiller S."/>
            <person name="Danchin A."/>
            <person name="Diard M."/>
            <person name="Dossat C."/>
            <person name="Karoui M.E."/>
            <person name="Frapy E."/>
            <person name="Garry L."/>
            <person name="Ghigo J.M."/>
            <person name="Gilles A.M."/>
            <person name="Johnson J."/>
            <person name="Le Bouguenec C."/>
            <person name="Lescat M."/>
            <person name="Mangenot S."/>
            <person name="Martinez-Jehanne V."/>
            <person name="Matic I."/>
            <person name="Nassif X."/>
            <person name="Oztas S."/>
            <person name="Petit M.A."/>
            <person name="Pichon C."/>
            <person name="Rouy Z."/>
            <person name="Ruf C.S."/>
            <person name="Schneider D."/>
            <person name="Tourret J."/>
            <person name="Vacherie B."/>
            <person name="Vallenet D."/>
            <person name="Medigue C."/>
            <person name="Rocha E.P.C."/>
            <person name="Denamur E."/>
        </authorList>
    </citation>
    <scope>NUCLEOTIDE SEQUENCE [LARGE SCALE GENOMIC DNA]</scope>
    <source>
        <strain>IAI1</strain>
    </source>
</reference>
<protein>
    <recommendedName>
        <fullName evidence="1">Anhydro-N-acetylmuramic acid kinase</fullName>
        <ecNumber evidence="1">2.7.1.170</ecNumber>
    </recommendedName>
    <alternativeName>
        <fullName evidence="1">AnhMurNAc kinase</fullName>
    </alternativeName>
</protein>
<accession>B7M0J7</accession>